<gene>
    <name evidence="1" type="primary">psbA</name>
</gene>
<protein>
    <recommendedName>
        <fullName evidence="1">Photosystem II protein D1</fullName>
        <shortName evidence="1">PSII D1 protein</shortName>
        <ecNumber evidence="1">1.10.3.9</ecNumber>
    </recommendedName>
    <alternativeName>
        <fullName evidence="1">Photosystem II Q(B) protein</fullName>
    </alternativeName>
</protein>
<keyword id="KW-0007">Acetylation</keyword>
<keyword id="KW-0106">Calcium</keyword>
<keyword id="KW-0148">Chlorophyll</keyword>
<keyword id="KW-0150">Chloroplast</keyword>
<keyword id="KW-0157">Chromophore</keyword>
<keyword id="KW-0249">Electron transport</keyword>
<keyword id="KW-0359">Herbicide resistance</keyword>
<keyword id="KW-0408">Iron</keyword>
<keyword id="KW-0460">Magnesium</keyword>
<keyword id="KW-0464">Manganese</keyword>
<keyword id="KW-0472">Membrane</keyword>
<keyword id="KW-0479">Metal-binding</keyword>
<keyword id="KW-0560">Oxidoreductase</keyword>
<keyword id="KW-0597">Phosphoprotein</keyword>
<keyword id="KW-0602">Photosynthesis</keyword>
<keyword id="KW-0604">Photosystem II</keyword>
<keyword id="KW-0934">Plastid</keyword>
<keyword id="KW-0793">Thylakoid</keyword>
<keyword id="KW-0812">Transmembrane</keyword>
<keyword id="KW-1133">Transmembrane helix</keyword>
<keyword id="KW-0813">Transport</keyword>
<sequence>MTAILERRESTSLWGRFCNWITSTENRLYIGWFGVLMIPTLLTATSVFIIAFIAAPPVDIDGIREPVSGSLLYGNNIISGAIIPTSAAIGLHFYPIWEAASVDEWLYNGGPYELIVLHFLLGVACYMGREWELSFRLGMRPWIAVAYSAPVAAATAVFLIYPIGQGSFSDGMPLGISGTFNFMIVFQAEHNILMHPFHMLGVAGVFGGSLFSAMHGSLVTSSLIRETTENESANEGYKFGQEEETYNIVAAHGYFGRLIFQYASFNNSRSLHFLLAAWPVVGIWFTALGISTMAFNLNGFNFNQSVVDSQGRVINTWADIINRANLGMEVMHERNAHNFPLDLAAVEAPSTNG</sequence>
<comment type="function">
    <text evidence="1">Photosystem II (PSII) is a light-driven water:plastoquinone oxidoreductase that uses light energy to abstract electrons from H(2)O, generating O(2) and a proton gradient subsequently used for ATP formation. It consists of a core antenna complex that captures photons, and an electron transfer chain that converts photonic excitation into a charge separation. The D1/D2 (PsbA/PsbD) reaction center heterodimer binds P680, the primary electron donor of PSII as well as several subsequent electron acceptors.</text>
</comment>
<comment type="catalytic activity">
    <reaction evidence="1">
        <text>2 a plastoquinone + 4 hnu + 2 H2O = 2 a plastoquinol + O2</text>
        <dbReference type="Rhea" id="RHEA:36359"/>
        <dbReference type="Rhea" id="RHEA-COMP:9561"/>
        <dbReference type="Rhea" id="RHEA-COMP:9562"/>
        <dbReference type="ChEBI" id="CHEBI:15377"/>
        <dbReference type="ChEBI" id="CHEBI:15379"/>
        <dbReference type="ChEBI" id="CHEBI:17757"/>
        <dbReference type="ChEBI" id="CHEBI:30212"/>
        <dbReference type="ChEBI" id="CHEBI:62192"/>
        <dbReference type="EC" id="1.10.3.9"/>
    </reaction>
</comment>
<comment type="cofactor">
    <text evidence="1">The D1/D2 heterodimer binds P680, chlorophylls that are the primary electron donor of PSII, and subsequent electron acceptors. It shares a non-heme iron and each subunit binds pheophytin, quinone, additional chlorophylls, carotenoids and lipids. D1 provides most of the ligands for the Mn4-Ca-O5 cluster of the oxygen-evolving complex (OEC). There is also a Cl(-1) ion associated with D1 and D2, which is required for oxygen evolution. The PSII complex binds additional chlorophylls, carotenoids and specific lipids.</text>
</comment>
<comment type="subunit">
    <text evidence="1">PSII is composed of 1 copy each of membrane proteins PsbA, PsbB, PsbC, PsbD, PsbE, PsbF, PsbH, PsbI, PsbJ, PsbK, PsbL, PsbM, PsbT, PsbX, PsbY, PsbZ, Psb30/Ycf12, at least 3 peripheral proteins of the oxygen-evolving complex and a large number of cofactors. It forms dimeric complexes.</text>
</comment>
<comment type="subcellular location">
    <subcellularLocation>
        <location evidence="1">Plastid</location>
        <location evidence="1">Chloroplast thylakoid membrane</location>
        <topology evidence="1">Multi-pass membrane protein</topology>
    </subcellularLocation>
</comment>
<comment type="PTM">
    <text evidence="1">Tyr-161 forms a radical intermediate that is referred to as redox-active TyrZ, YZ or Y-Z.</text>
</comment>
<comment type="PTM">
    <text evidence="1">C-terminally processed by CTPA; processing is essential to allow assembly of the oxygen-evolving complex and thus photosynthetic growth.</text>
</comment>
<comment type="miscellaneous">
    <text evidence="1">2 of the reaction center chlorophylls (ChlD1 and ChlD2) are entirely coordinated by water.</text>
</comment>
<comment type="miscellaneous">
    <text evidence="1">Herbicides such as atrazine, BNT, diuron or ioxynil bind in the Q(B) binding site and block subsequent electron transfer.</text>
</comment>
<comment type="similarity">
    <text evidence="1">Belongs to the reaction center PufL/M/PsbA/D family.</text>
</comment>
<evidence type="ECO:0000255" key="1">
    <source>
        <dbReference type="HAMAP-Rule" id="MF_01379"/>
    </source>
</evidence>
<reference key="1">
    <citation type="journal article" date="2007" name="Mol. Phylogenet. Evol.">
        <title>Phylogenetic and evolutionary implications of complete chloroplast genome sequences of four early-diverging angiosperms: Buxus (Buxaceae), Chloranthus (Chloranthaceae), Dioscorea (Dioscoreaceae), and Illicium (Schisandraceae).</title>
        <authorList>
            <person name="Hansen D.R."/>
            <person name="Dastidar S.G."/>
            <person name="Cai Z."/>
            <person name="Penaflor C."/>
            <person name="Kuehl J.V."/>
            <person name="Boore J.L."/>
            <person name="Jansen R.K."/>
        </authorList>
    </citation>
    <scope>NUCLEOTIDE SEQUENCE [LARGE SCALE GENOMIC DNA]</scope>
</reference>
<organism>
    <name type="scientific">Dioscorea elephantipes</name>
    <name type="common">Elephant's foot yam</name>
    <name type="synonym">Testudinaria elephantipes</name>
    <dbReference type="NCBI Taxonomy" id="145284"/>
    <lineage>
        <taxon>Eukaryota</taxon>
        <taxon>Viridiplantae</taxon>
        <taxon>Streptophyta</taxon>
        <taxon>Embryophyta</taxon>
        <taxon>Tracheophyta</taxon>
        <taxon>Spermatophyta</taxon>
        <taxon>Magnoliopsida</taxon>
        <taxon>Liliopsida</taxon>
        <taxon>Dioscoreales</taxon>
        <taxon>Dioscoreaceae</taxon>
        <taxon>Dioscorea</taxon>
    </lineage>
</organism>
<proteinExistence type="inferred from homology"/>
<name>PSBA_DIOEL</name>
<dbReference type="EC" id="1.10.3.9" evidence="1"/>
<dbReference type="EMBL" id="EF380353">
    <property type="protein sequence ID" value="ABR01411.1"/>
    <property type="molecule type" value="Genomic_DNA"/>
</dbReference>
<dbReference type="RefSeq" id="YP_001294333.1">
    <property type="nucleotide sequence ID" value="NC_009601.1"/>
</dbReference>
<dbReference type="SMR" id="A6MMI8"/>
<dbReference type="GeneID" id="5236612"/>
<dbReference type="GO" id="GO:0009535">
    <property type="term" value="C:chloroplast thylakoid membrane"/>
    <property type="evidence" value="ECO:0007669"/>
    <property type="project" value="UniProtKB-SubCell"/>
</dbReference>
<dbReference type="GO" id="GO:0009523">
    <property type="term" value="C:photosystem II"/>
    <property type="evidence" value="ECO:0007669"/>
    <property type="project" value="UniProtKB-KW"/>
</dbReference>
<dbReference type="GO" id="GO:0016168">
    <property type="term" value="F:chlorophyll binding"/>
    <property type="evidence" value="ECO:0007669"/>
    <property type="project" value="UniProtKB-UniRule"/>
</dbReference>
<dbReference type="GO" id="GO:0045156">
    <property type="term" value="F:electron transporter, transferring electrons within the cyclic electron transport pathway of photosynthesis activity"/>
    <property type="evidence" value="ECO:0007669"/>
    <property type="project" value="InterPro"/>
</dbReference>
<dbReference type="GO" id="GO:0005506">
    <property type="term" value="F:iron ion binding"/>
    <property type="evidence" value="ECO:0007669"/>
    <property type="project" value="UniProtKB-UniRule"/>
</dbReference>
<dbReference type="GO" id="GO:0016682">
    <property type="term" value="F:oxidoreductase activity, acting on diphenols and related substances as donors, oxygen as acceptor"/>
    <property type="evidence" value="ECO:0007669"/>
    <property type="project" value="UniProtKB-UniRule"/>
</dbReference>
<dbReference type="GO" id="GO:0010242">
    <property type="term" value="F:oxygen evolving activity"/>
    <property type="evidence" value="ECO:0007669"/>
    <property type="project" value="UniProtKB-EC"/>
</dbReference>
<dbReference type="GO" id="GO:0009772">
    <property type="term" value="P:photosynthetic electron transport in photosystem II"/>
    <property type="evidence" value="ECO:0007669"/>
    <property type="project" value="InterPro"/>
</dbReference>
<dbReference type="GO" id="GO:0009635">
    <property type="term" value="P:response to herbicide"/>
    <property type="evidence" value="ECO:0007669"/>
    <property type="project" value="UniProtKB-KW"/>
</dbReference>
<dbReference type="CDD" id="cd09289">
    <property type="entry name" value="Photosystem-II_D1"/>
    <property type="match status" value="1"/>
</dbReference>
<dbReference type="FunFam" id="1.20.85.10:FF:000002">
    <property type="entry name" value="Photosystem II protein D1"/>
    <property type="match status" value="1"/>
</dbReference>
<dbReference type="Gene3D" id="1.20.85.10">
    <property type="entry name" value="Photosystem II protein D1-like"/>
    <property type="match status" value="1"/>
</dbReference>
<dbReference type="HAMAP" id="MF_01379">
    <property type="entry name" value="PSII_PsbA_D1"/>
    <property type="match status" value="1"/>
</dbReference>
<dbReference type="InterPro" id="IPR055266">
    <property type="entry name" value="D1/D2"/>
</dbReference>
<dbReference type="InterPro" id="IPR036854">
    <property type="entry name" value="Photo_II_D1/D2_sf"/>
</dbReference>
<dbReference type="InterPro" id="IPR000484">
    <property type="entry name" value="Photo_RC_L/M"/>
</dbReference>
<dbReference type="InterPro" id="IPR055265">
    <property type="entry name" value="Photo_RC_L/M_CS"/>
</dbReference>
<dbReference type="InterPro" id="IPR005867">
    <property type="entry name" value="PSII_D1"/>
</dbReference>
<dbReference type="NCBIfam" id="TIGR01151">
    <property type="entry name" value="psbA"/>
    <property type="match status" value="1"/>
</dbReference>
<dbReference type="PANTHER" id="PTHR33149">
    <property type="entry name" value="PHOTOSYSTEM II PROTEIN D1"/>
    <property type="match status" value="1"/>
</dbReference>
<dbReference type="PANTHER" id="PTHR33149:SF58">
    <property type="entry name" value="PHOTOSYSTEM II PROTEIN D1"/>
    <property type="match status" value="1"/>
</dbReference>
<dbReference type="Pfam" id="PF00124">
    <property type="entry name" value="Photo_RC"/>
    <property type="match status" value="1"/>
</dbReference>
<dbReference type="PRINTS" id="PR00256">
    <property type="entry name" value="REACTNCENTRE"/>
</dbReference>
<dbReference type="SUPFAM" id="SSF81483">
    <property type="entry name" value="Bacterial photosystem II reaction centre, L and M subunits"/>
    <property type="match status" value="1"/>
</dbReference>
<dbReference type="PROSITE" id="PS00244">
    <property type="entry name" value="REACTION_CENTER"/>
    <property type="match status" value="1"/>
</dbReference>
<feature type="initiator methionine" description="Removed" evidence="1">
    <location>
        <position position="1"/>
    </location>
</feature>
<feature type="chain" id="PRO_0000339987" description="Photosystem II protein D1" evidence="1">
    <location>
        <begin position="2"/>
        <end position="344"/>
    </location>
</feature>
<feature type="propeptide" id="PRO_0000339988" evidence="1">
    <location>
        <begin position="345"/>
        <end position="353"/>
    </location>
</feature>
<feature type="transmembrane region" description="Helical" evidence="1">
    <location>
        <begin position="29"/>
        <end position="46"/>
    </location>
</feature>
<feature type="transmembrane region" description="Helical" evidence="1">
    <location>
        <begin position="118"/>
        <end position="133"/>
    </location>
</feature>
<feature type="transmembrane region" description="Helical" evidence="1">
    <location>
        <begin position="142"/>
        <end position="156"/>
    </location>
</feature>
<feature type="transmembrane region" description="Helical" evidence="1">
    <location>
        <begin position="197"/>
        <end position="218"/>
    </location>
</feature>
<feature type="transmembrane region" description="Helical" evidence="1">
    <location>
        <begin position="274"/>
        <end position="288"/>
    </location>
</feature>
<feature type="binding site" description="axial binding residue" evidence="1">
    <location>
        <position position="118"/>
    </location>
    <ligand>
        <name>chlorophyll a</name>
        <dbReference type="ChEBI" id="CHEBI:58416"/>
        <label>ChlzD1</label>
    </ligand>
    <ligandPart>
        <name>Mg</name>
        <dbReference type="ChEBI" id="CHEBI:25107"/>
    </ligandPart>
</feature>
<feature type="binding site" evidence="1">
    <location>
        <position position="126"/>
    </location>
    <ligand>
        <name>pheophytin a</name>
        <dbReference type="ChEBI" id="CHEBI:136840"/>
        <label>D1</label>
    </ligand>
</feature>
<feature type="binding site" evidence="1">
    <location>
        <position position="170"/>
    </location>
    <ligand>
        <name>[CaMn4O5] cluster</name>
        <dbReference type="ChEBI" id="CHEBI:189552"/>
    </ligand>
</feature>
<feature type="binding site" evidence="1">
    <location>
        <position position="189"/>
    </location>
    <ligand>
        <name>[CaMn4O5] cluster</name>
        <dbReference type="ChEBI" id="CHEBI:189552"/>
    </ligand>
</feature>
<feature type="binding site" description="axial binding residue" evidence="1">
    <location>
        <position position="198"/>
    </location>
    <ligand>
        <name>chlorophyll a</name>
        <dbReference type="ChEBI" id="CHEBI:58416"/>
        <label>PD1</label>
    </ligand>
    <ligandPart>
        <name>Mg</name>
        <dbReference type="ChEBI" id="CHEBI:25107"/>
    </ligandPart>
</feature>
<feature type="binding site" evidence="1">
    <location>
        <position position="215"/>
    </location>
    <ligand>
        <name>a quinone</name>
        <dbReference type="ChEBI" id="CHEBI:132124"/>
        <label>B</label>
    </ligand>
</feature>
<feature type="binding site" evidence="1">
    <location>
        <position position="215"/>
    </location>
    <ligand>
        <name>Fe cation</name>
        <dbReference type="ChEBI" id="CHEBI:24875"/>
        <note>ligand shared with heterodimeric partner</note>
    </ligand>
</feature>
<feature type="binding site" evidence="1">
    <location>
        <begin position="264"/>
        <end position="265"/>
    </location>
    <ligand>
        <name>a quinone</name>
        <dbReference type="ChEBI" id="CHEBI:132124"/>
        <label>B</label>
    </ligand>
</feature>
<feature type="binding site" evidence="1">
    <location>
        <position position="272"/>
    </location>
    <ligand>
        <name>Fe cation</name>
        <dbReference type="ChEBI" id="CHEBI:24875"/>
        <note>ligand shared with heterodimeric partner</note>
    </ligand>
</feature>
<feature type="binding site" evidence="1">
    <location>
        <position position="332"/>
    </location>
    <ligand>
        <name>[CaMn4O5] cluster</name>
        <dbReference type="ChEBI" id="CHEBI:189552"/>
    </ligand>
</feature>
<feature type="binding site" evidence="1">
    <location>
        <position position="333"/>
    </location>
    <ligand>
        <name>[CaMn4O5] cluster</name>
        <dbReference type="ChEBI" id="CHEBI:189552"/>
    </ligand>
</feature>
<feature type="binding site" evidence="1">
    <location>
        <position position="342"/>
    </location>
    <ligand>
        <name>[CaMn4O5] cluster</name>
        <dbReference type="ChEBI" id="CHEBI:189552"/>
    </ligand>
</feature>
<feature type="binding site" evidence="1">
    <location>
        <position position="344"/>
    </location>
    <ligand>
        <name>[CaMn4O5] cluster</name>
        <dbReference type="ChEBI" id="CHEBI:189552"/>
    </ligand>
</feature>
<feature type="site" description="Tyrosine radical intermediate" evidence="1">
    <location>
        <position position="161"/>
    </location>
</feature>
<feature type="site" description="Stabilizes free radical intermediate" evidence="1">
    <location>
        <position position="190"/>
    </location>
</feature>
<feature type="site" description="Cleavage; by CTPA" evidence="1">
    <location>
        <begin position="344"/>
        <end position="345"/>
    </location>
</feature>
<feature type="modified residue" description="N-acetylthreonine" evidence="1">
    <location>
        <position position="2"/>
    </location>
</feature>
<feature type="modified residue" description="Phosphothreonine" evidence="1">
    <location>
        <position position="2"/>
    </location>
</feature>
<geneLocation type="chloroplast"/>
<accession>A6MMI8</accession>